<name>GPDA_BACVZ</name>
<gene>
    <name evidence="1" type="primary">gpsA</name>
    <name type="ordered locus">RBAM_020990</name>
</gene>
<accession>A7Z635</accession>
<evidence type="ECO:0000255" key="1">
    <source>
        <dbReference type="HAMAP-Rule" id="MF_00394"/>
    </source>
</evidence>
<comment type="function">
    <text evidence="1">Catalyzes the reduction of the glycolytic intermediate dihydroxyacetone phosphate (DHAP) to sn-glycerol 3-phosphate (G3P), the key precursor for phospholipid synthesis.</text>
</comment>
<comment type="catalytic activity">
    <reaction evidence="1">
        <text>sn-glycerol 3-phosphate + NAD(+) = dihydroxyacetone phosphate + NADH + H(+)</text>
        <dbReference type="Rhea" id="RHEA:11092"/>
        <dbReference type="ChEBI" id="CHEBI:15378"/>
        <dbReference type="ChEBI" id="CHEBI:57540"/>
        <dbReference type="ChEBI" id="CHEBI:57597"/>
        <dbReference type="ChEBI" id="CHEBI:57642"/>
        <dbReference type="ChEBI" id="CHEBI:57945"/>
        <dbReference type="EC" id="1.1.1.94"/>
    </reaction>
    <physiologicalReaction direction="right-to-left" evidence="1">
        <dbReference type="Rhea" id="RHEA:11094"/>
    </physiologicalReaction>
</comment>
<comment type="catalytic activity">
    <reaction evidence="1">
        <text>sn-glycerol 3-phosphate + NADP(+) = dihydroxyacetone phosphate + NADPH + H(+)</text>
        <dbReference type="Rhea" id="RHEA:11096"/>
        <dbReference type="ChEBI" id="CHEBI:15378"/>
        <dbReference type="ChEBI" id="CHEBI:57597"/>
        <dbReference type="ChEBI" id="CHEBI:57642"/>
        <dbReference type="ChEBI" id="CHEBI:57783"/>
        <dbReference type="ChEBI" id="CHEBI:58349"/>
        <dbReference type="EC" id="1.1.1.94"/>
    </reaction>
    <physiologicalReaction direction="right-to-left" evidence="1">
        <dbReference type="Rhea" id="RHEA:11098"/>
    </physiologicalReaction>
</comment>
<comment type="pathway">
    <text evidence="1">Membrane lipid metabolism; glycerophospholipid metabolism.</text>
</comment>
<comment type="subcellular location">
    <subcellularLocation>
        <location evidence="1">Cytoplasm</location>
    </subcellularLocation>
</comment>
<comment type="similarity">
    <text evidence="1">Belongs to the NAD-dependent glycerol-3-phosphate dehydrogenase family.</text>
</comment>
<organism>
    <name type="scientific">Bacillus velezensis (strain DSM 23117 / BGSC 10A6 / LMG 26770 / FZB42)</name>
    <name type="common">Bacillus amyloliquefaciens subsp. plantarum</name>
    <dbReference type="NCBI Taxonomy" id="326423"/>
    <lineage>
        <taxon>Bacteria</taxon>
        <taxon>Bacillati</taxon>
        <taxon>Bacillota</taxon>
        <taxon>Bacilli</taxon>
        <taxon>Bacillales</taxon>
        <taxon>Bacillaceae</taxon>
        <taxon>Bacillus</taxon>
        <taxon>Bacillus amyloliquefaciens group</taxon>
    </lineage>
</organism>
<reference key="1">
    <citation type="journal article" date="2007" name="Nat. Biotechnol.">
        <title>Comparative analysis of the complete genome sequence of the plant growth-promoting bacterium Bacillus amyloliquefaciens FZB42.</title>
        <authorList>
            <person name="Chen X.H."/>
            <person name="Koumoutsi A."/>
            <person name="Scholz R."/>
            <person name="Eisenreich A."/>
            <person name="Schneider K."/>
            <person name="Heinemeyer I."/>
            <person name="Morgenstern B."/>
            <person name="Voss B."/>
            <person name="Hess W.R."/>
            <person name="Reva O."/>
            <person name="Junge H."/>
            <person name="Voigt B."/>
            <person name="Jungblut P.R."/>
            <person name="Vater J."/>
            <person name="Suessmuth R."/>
            <person name="Liesegang H."/>
            <person name="Strittmatter A."/>
            <person name="Gottschalk G."/>
            <person name="Borriss R."/>
        </authorList>
    </citation>
    <scope>NUCLEOTIDE SEQUENCE [LARGE SCALE GENOMIC DNA]</scope>
    <source>
        <strain>DSM 23117 / BGSC 10A6 / LMG 26770 / FZB42</strain>
    </source>
</reference>
<protein>
    <recommendedName>
        <fullName evidence="1">Glycerol-3-phosphate dehydrogenase [NAD(P)+]</fullName>
        <ecNumber evidence="1">1.1.1.94</ecNumber>
    </recommendedName>
    <alternativeName>
        <fullName evidence="1">NAD(P)(+)-dependent glycerol-3-phosphate dehydrogenase</fullName>
    </alternativeName>
    <alternativeName>
        <fullName evidence="1">NAD(P)H-dependent dihydroxyacetone-phosphate reductase</fullName>
    </alternativeName>
</protein>
<proteinExistence type="inferred from homology"/>
<feature type="chain" id="PRO_1000049481" description="Glycerol-3-phosphate dehydrogenase [NAD(P)+]">
    <location>
        <begin position="1"/>
        <end position="345"/>
    </location>
</feature>
<feature type="active site" description="Proton acceptor" evidence="1">
    <location>
        <position position="192"/>
    </location>
</feature>
<feature type="binding site" evidence="1">
    <location>
        <position position="11"/>
    </location>
    <ligand>
        <name>NADPH</name>
        <dbReference type="ChEBI" id="CHEBI:57783"/>
    </ligand>
</feature>
<feature type="binding site" evidence="1">
    <location>
        <position position="12"/>
    </location>
    <ligand>
        <name>NADPH</name>
        <dbReference type="ChEBI" id="CHEBI:57783"/>
    </ligand>
</feature>
<feature type="binding site" evidence="1">
    <location>
        <position position="32"/>
    </location>
    <ligand>
        <name>NADPH</name>
        <dbReference type="ChEBI" id="CHEBI:57783"/>
    </ligand>
</feature>
<feature type="binding site" evidence="1">
    <location>
        <position position="33"/>
    </location>
    <ligand>
        <name>NADPH</name>
        <dbReference type="ChEBI" id="CHEBI:57783"/>
    </ligand>
</feature>
<feature type="binding site" evidence="1">
    <location>
        <position position="106"/>
    </location>
    <ligand>
        <name>NADPH</name>
        <dbReference type="ChEBI" id="CHEBI:57783"/>
    </ligand>
</feature>
<feature type="binding site" evidence="1">
    <location>
        <position position="106"/>
    </location>
    <ligand>
        <name>sn-glycerol 3-phosphate</name>
        <dbReference type="ChEBI" id="CHEBI:57597"/>
    </ligand>
</feature>
<feature type="binding site" evidence="1">
    <location>
        <position position="137"/>
    </location>
    <ligand>
        <name>sn-glycerol 3-phosphate</name>
        <dbReference type="ChEBI" id="CHEBI:57597"/>
    </ligand>
</feature>
<feature type="binding site" evidence="1">
    <location>
        <position position="139"/>
    </location>
    <ligand>
        <name>sn-glycerol 3-phosphate</name>
        <dbReference type="ChEBI" id="CHEBI:57597"/>
    </ligand>
</feature>
<feature type="binding site" evidence="1">
    <location>
        <position position="141"/>
    </location>
    <ligand>
        <name>NADPH</name>
        <dbReference type="ChEBI" id="CHEBI:57783"/>
    </ligand>
</feature>
<feature type="binding site" evidence="1">
    <location>
        <position position="192"/>
    </location>
    <ligand>
        <name>sn-glycerol 3-phosphate</name>
        <dbReference type="ChEBI" id="CHEBI:57597"/>
    </ligand>
</feature>
<feature type="binding site" evidence="1">
    <location>
        <position position="245"/>
    </location>
    <ligand>
        <name>sn-glycerol 3-phosphate</name>
        <dbReference type="ChEBI" id="CHEBI:57597"/>
    </ligand>
</feature>
<feature type="binding site" evidence="1">
    <location>
        <position position="255"/>
    </location>
    <ligand>
        <name>sn-glycerol 3-phosphate</name>
        <dbReference type="ChEBI" id="CHEBI:57597"/>
    </ligand>
</feature>
<feature type="binding site" evidence="1">
    <location>
        <position position="256"/>
    </location>
    <ligand>
        <name>NADPH</name>
        <dbReference type="ChEBI" id="CHEBI:57783"/>
    </ligand>
</feature>
<feature type="binding site" evidence="1">
    <location>
        <position position="256"/>
    </location>
    <ligand>
        <name>sn-glycerol 3-phosphate</name>
        <dbReference type="ChEBI" id="CHEBI:57597"/>
    </ligand>
</feature>
<feature type="binding site" evidence="1">
    <location>
        <position position="257"/>
    </location>
    <ligand>
        <name>sn-glycerol 3-phosphate</name>
        <dbReference type="ChEBI" id="CHEBI:57597"/>
    </ligand>
</feature>
<feature type="binding site" evidence="1">
    <location>
        <position position="280"/>
    </location>
    <ligand>
        <name>NADPH</name>
        <dbReference type="ChEBI" id="CHEBI:57783"/>
    </ligand>
</feature>
<feature type="binding site" evidence="1">
    <location>
        <position position="282"/>
    </location>
    <ligand>
        <name>NADPH</name>
        <dbReference type="ChEBI" id="CHEBI:57783"/>
    </ligand>
</feature>
<dbReference type="EC" id="1.1.1.94" evidence="1"/>
<dbReference type="EMBL" id="CP000560">
    <property type="protein sequence ID" value="ABS74461.1"/>
    <property type="molecule type" value="Genomic_DNA"/>
</dbReference>
<dbReference type="RefSeq" id="WP_003153434.1">
    <property type="nucleotide sequence ID" value="NC_009725.2"/>
</dbReference>
<dbReference type="SMR" id="A7Z635"/>
<dbReference type="GeneID" id="93081234"/>
<dbReference type="KEGG" id="bay:RBAM_020990"/>
<dbReference type="HOGENOM" id="CLU_033449_0_2_9"/>
<dbReference type="UniPathway" id="UPA00940"/>
<dbReference type="Proteomes" id="UP000001120">
    <property type="component" value="Chromosome"/>
</dbReference>
<dbReference type="GO" id="GO:0005829">
    <property type="term" value="C:cytosol"/>
    <property type="evidence" value="ECO:0007669"/>
    <property type="project" value="TreeGrafter"/>
</dbReference>
<dbReference type="GO" id="GO:0047952">
    <property type="term" value="F:glycerol-3-phosphate dehydrogenase [NAD(P)+] activity"/>
    <property type="evidence" value="ECO:0007669"/>
    <property type="project" value="UniProtKB-UniRule"/>
</dbReference>
<dbReference type="GO" id="GO:0051287">
    <property type="term" value="F:NAD binding"/>
    <property type="evidence" value="ECO:0007669"/>
    <property type="project" value="InterPro"/>
</dbReference>
<dbReference type="GO" id="GO:0005975">
    <property type="term" value="P:carbohydrate metabolic process"/>
    <property type="evidence" value="ECO:0007669"/>
    <property type="project" value="InterPro"/>
</dbReference>
<dbReference type="GO" id="GO:0046167">
    <property type="term" value="P:glycerol-3-phosphate biosynthetic process"/>
    <property type="evidence" value="ECO:0007669"/>
    <property type="project" value="UniProtKB-UniRule"/>
</dbReference>
<dbReference type="GO" id="GO:0046168">
    <property type="term" value="P:glycerol-3-phosphate catabolic process"/>
    <property type="evidence" value="ECO:0007669"/>
    <property type="project" value="InterPro"/>
</dbReference>
<dbReference type="GO" id="GO:0006650">
    <property type="term" value="P:glycerophospholipid metabolic process"/>
    <property type="evidence" value="ECO:0007669"/>
    <property type="project" value="UniProtKB-UniRule"/>
</dbReference>
<dbReference type="GO" id="GO:0008654">
    <property type="term" value="P:phospholipid biosynthetic process"/>
    <property type="evidence" value="ECO:0007669"/>
    <property type="project" value="UniProtKB-KW"/>
</dbReference>
<dbReference type="FunFam" id="1.10.1040.10:FF:000001">
    <property type="entry name" value="Glycerol-3-phosphate dehydrogenase [NAD(P)+]"/>
    <property type="match status" value="1"/>
</dbReference>
<dbReference type="FunFam" id="3.40.50.720:FF:000019">
    <property type="entry name" value="Glycerol-3-phosphate dehydrogenase [NAD(P)+]"/>
    <property type="match status" value="1"/>
</dbReference>
<dbReference type="Gene3D" id="1.10.1040.10">
    <property type="entry name" value="N-(1-d-carboxylethyl)-l-norvaline Dehydrogenase, domain 2"/>
    <property type="match status" value="1"/>
</dbReference>
<dbReference type="Gene3D" id="3.40.50.720">
    <property type="entry name" value="NAD(P)-binding Rossmann-like Domain"/>
    <property type="match status" value="1"/>
</dbReference>
<dbReference type="HAMAP" id="MF_00394">
    <property type="entry name" value="NAD_Glyc3P_dehydrog"/>
    <property type="match status" value="1"/>
</dbReference>
<dbReference type="InterPro" id="IPR008927">
    <property type="entry name" value="6-PGluconate_DH-like_C_sf"/>
</dbReference>
<dbReference type="InterPro" id="IPR013328">
    <property type="entry name" value="6PGD_dom2"/>
</dbReference>
<dbReference type="InterPro" id="IPR006168">
    <property type="entry name" value="G3P_DH_NAD-dep"/>
</dbReference>
<dbReference type="InterPro" id="IPR006109">
    <property type="entry name" value="G3P_DH_NAD-dep_C"/>
</dbReference>
<dbReference type="InterPro" id="IPR011128">
    <property type="entry name" value="G3P_DH_NAD-dep_N"/>
</dbReference>
<dbReference type="InterPro" id="IPR036291">
    <property type="entry name" value="NAD(P)-bd_dom_sf"/>
</dbReference>
<dbReference type="NCBIfam" id="NF000940">
    <property type="entry name" value="PRK00094.1-2"/>
    <property type="match status" value="1"/>
</dbReference>
<dbReference type="NCBIfam" id="NF000941">
    <property type="entry name" value="PRK00094.1-3"/>
    <property type="match status" value="1"/>
</dbReference>
<dbReference type="NCBIfam" id="NF000942">
    <property type="entry name" value="PRK00094.1-4"/>
    <property type="match status" value="1"/>
</dbReference>
<dbReference type="PANTHER" id="PTHR11728">
    <property type="entry name" value="GLYCEROL-3-PHOSPHATE DEHYDROGENASE"/>
    <property type="match status" value="1"/>
</dbReference>
<dbReference type="PANTHER" id="PTHR11728:SF1">
    <property type="entry name" value="GLYCEROL-3-PHOSPHATE DEHYDROGENASE [NAD(+)] 2, CHLOROPLASTIC"/>
    <property type="match status" value="1"/>
</dbReference>
<dbReference type="Pfam" id="PF07479">
    <property type="entry name" value="NAD_Gly3P_dh_C"/>
    <property type="match status" value="1"/>
</dbReference>
<dbReference type="Pfam" id="PF01210">
    <property type="entry name" value="NAD_Gly3P_dh_N"/>
    <property type="match status" value="1"/>
</dbReference>
<dbReference type="PIRSF" id="PIRSF000114">
    <property type="entry name" value="Glycerol-3-P_dh"/>
    <property type="match status" value="1"/>
</dbReference>
<dbReference type="PRINTS" id="PR00077">
    <property type="entry name" value="GPDHDRGNASE"/>
</dbReference>
<dbReference type="SUPFAM" id="SSF48179">
    <property type="entry name" value="6-phosphogluconate dehydrogenase C-terminal domain-like"/>
    <property type="match status" value="1"/>
</dbReference>
<dbReference type="SUPFAM" id="SSF51735">
    <property type="entry name" value="NAD(P)-binding Rossmann-fold domains"/>
    <property type="match status" value="1"/>
</dbReference>
<dbReference type="PROSITE" id="PS00957">
    <property type="entry name" value="NAD_G3PDH"/>
    <property type="match status" value="1"/>
</dbReference>
<sequence>MKKVAMLGAGSWGTALSLVLADNGHQVMMWGHRAELIDQINELHENKDYLPGVELSSSIIGTADLSEALKGADFIIVAVPTKAIREVLKKALPYIPKQSIFVHVSKGIEPDSLLRISELMEEELPEEYRKDIVVLSGPSHAEEVGLRHPTTVTSSSKNIKAAEAVQDLFMNQHFRVYTNPDMIGVEIGGALKNIIALAAGITDGLGYGDNAKAALITRGLAEIARLGTKMGGNPLTFSGLTGVGDLIVTCTSVHSRNWRAGNLLGKGYKLEAVLDKMGMVVEGVRTTKAAYQLSQKYQVKMPITEALHQVLFNGQKVETAVESLMARVKTHEMEDLVNTFENRVK</sequence>
<keyword id="KW-0963">Cytoplasm</keyword>
<keyword id="KW-0444">Lipid biosynthesis</keyword>
<keyword id="KW-0443">Lipid metabolism</keyword>
<keyword id="KW-0520">NAD</keyword>
<keyword id="KW-0521">NADP</keyword>
<keyword id="KW-0547">Nucleotide-binding</keyword>
<keyword id="KW-0560">Oxidoreductase</keyword>
<keyword id="KW-0594">Phospholipid biosynthesis</keyword>
<keyword id="KW-1208">Phospholipid metabolism</keyword>